<evidence type="ECO:0000250" key="1"/>
<evidence type="ECO:0000250" key="2">
    <source>
        <dbReference type="UniProtKB" id="P22985"/>
    </source>
</evidence>
<evidence type="ECO:0000255" key="3">
    <source>
        <dbReference type="PROSITE-ProRule" id="PRU00465"/>
    </source>
</evidence>
<evidence type="ECO:0000255" key="4">
    <source>
        <dbReference type="PROSITE-ProRule" id="PRU00718"/>
    </source>
</evidence>
<evidence type="ECO:0000305" key="5"/>
<protein>
    <recommendedName>
        <fullName>Xanthine dehydrogenase</fullName>
        <shortName>XD</shortName>
        <ecNumber>1.17.1.4</ecNumber>
    </recommendedName>
</protein>
<feature type="chain" id="PRO_0000166078" description="Xanthine dehydrogenase">
    <location>
        <begin position="1"/>
        <end position="1353"/>
    </location>
</feature>
<feature type="domain" description="2Fe-2S ferredoxin-type" evidence="3">
    <location>
        <begin position="17"/>
        <end position="104"/>
    </location>
</feature>
<feature type="domain" description="FAD-binding PCMH-type" evidence="4">
    <location>
        <begin position="245"/>
        <end position="434"/>
    </location>
</feature>
<feature type="active site" description="Proton acceptor" evidence="1">
    <location>
        <position position="1285"/>
    </location>
</feature>
<feature type="binding site" evidence="2">
    <location>
        <position position="56"/>
    </location>
    <ligand>
        <name>[2Fe-2S] cluster</name>
        <dbReference type="ChEBI" id="CHEBI:190135"/>
        <label>1</label>
    </ligand>
</feature>
<feature type="binding site" evidence="2">
    <location>
        <position position="61"/>
    </location>
    <ligand>
        <name>[2Fe-2S] cluster</name>
        <dbReference type="ChEBI" id="CHEBI:190135"/>
        <label>1</label>
    </ligand>
</feature>
<feature type="binding site" evidence="2">
    <location>
        <position position="64"/>
    </location>
    <ligand>
        <name>[2Fe-2S] cluster</name>
        <dbReference type="ChEBI" id="CHEBI:190135"/>
        <label>1</label>
    </ligand>
</feature>
<feature type="binding site" evidence="2">
    <location>
        <position position="86"/>
    </location>
    <ligand>
        <name>[2Fe-2S] cluster</name>
        <dbReference type="ChEBI" id="CHEBI:190135"/>
        <label>1</label>
    </ligand>
</feature>
<feature type="binding site" evidence="2">
    <location>
        <position position="126"/>
    </location>
    <ligand>
        <name>[2Fe-2S] cluster</name>
        <dbReference type="ChEBI" id="CHEBI:190135"/>
        <label>2</label>
    </ligand>
</feature>
<feature type="binding site" evidence="2">
    <location>
        <position position="129"/>
    </location>
    <ligand>
        <name>[2Fe-2S] cluster</name>
        <dbReference type="ChEBI" id="CHEBI:190135"/>
        <label>2</label>
    </ligand>
</feature>
<feature type="binding site" evidence="2">
    <location>
        <position position="161"/>
    </location>
    <ligand>
        <name>[2Fe-2S] cluster</name>
        <dbReference type="ChEBI" id="CHEBI:190135"/>
        <label>2</label>
    </ligand>
</feature>
<feature type="binding site" evidence="2">
    <location>
        <position position="163"/>
    </location>
    <ligand>
        <name>[2Fe-2S] cluster</name>
        <dbReference type="ChEBI" id="CHEBI:190135"/>
        <label>2</label>
    </ligand>
</feature>
<feature type="binding site" evidence="1">
    <location>
        <begin position="273"/>
        <end position="280"/>
    </location>
    <ligand>
        <name>FAD</name>
        <dbReference type="ChEBI" id="CHEBI:57692"/>
    </ligand>
</feature>
<feature type="binding site" evidence="1">
    <location>
        <position position="353"/>
    </location>
    <ligand>
        <name>FAD</name>
        <dbReference type="ChEBI" id="CHEBI:57692"/>
    </ligand>
</feature>
<feature type="binding site" evidence="1">
    <location>
        <begin position="363"/>
        <end position="367"/>
    </location>
    <ligand>
        <name>FAD</name>
        <dbReference type="ChEBI" id="CHEBI:57692"/>
    </ligand>
</feature>
<feature type="binding site" evidence="1">
    <location>
        <position position="376"/>
    </location>
    <ligand>
        <name>FAD</name>
        <dbReference type="ChEBI" id="CHEBI:57692"/>
    </ligand>
</feature>
<feature type="binding site" evidence="1">
    <location>
        <position position="424"/>
    </location>
    <ligand>
        <name>FAD</name>
        <dbReference type="ChEBI" id="CHEBI:57692"/>
    </ligand>
</feature>
<feature type="binding site" evidence="1">
    <location>
        <position position="442"/>
    </location>
    <ligand>
        <name>FAD</name>
        <dbReference type="ChEBI" id="CHEBI:57692"/>
    </ligand>
</feature>
<feature type="binding site" evidence="1">
    <location>
        <position position="790"/>
    </location>
    <ligand>
        <name>Mo-molybdopterin</name>
        <dbReference type="ChEBI" id="CHEBI:71302"/>
    </ligand>
    <ligandPart>
        <name>Mo</name>
        <dbReference type="ChEBI" id="CHEBI:28685"/>
    </ligandPart>
</feature>
<feature type="binding site" evidence="1">
    <location>
        <position position="821"/>
    </location>
    <ligand>
        <name>Mo-molybdopterin</name>
        <dbReference type="ChEBI" id="CHEBI:71302"/>
    </ligand>
    <ligandPart>
        <name>Mo</name>
        <dbReference type="ChEBI" id="CHEBI:28685"/>
    </ligandPart>
</feature>
<feature type="binding site" evidence="1">
    <location>
        <position position="825"/>
    </location>
    <ligand>
        <name>substrate</name>
    </ligand>
</feature>
<feature type="binding site" evidence="1">
    <location>
        <position position="903"/>
    </location>
    <ligand>
        <name>substrate</name>
    </ligand>
</feature>
<feature type="binding site" evidence="1">
    <location>
        <position position="935"/>
    </location>
    <ligand>
        <name>Mo-molybdopterin</name>
        <dbReference type="ChEBI" id="CHEBI:71302"/>
    </ligand>
    <ligandPart>
        <name>Mo</name>
        <dbReference type="ChEBI" id="CHEBI:28685"/>
    </ligandPart>
</feature>
<feature type="binding site" evidence="1">
    <location>
        <position position="937"/>
    </location>
    <ligand>
        <name>substrate</name>
    </ligand>
</feature>
<feature type="binding site" evidence="1">
    <location>
        <position position="1102"/>
    </location>
    <ligand>
        <name>Mo-molybdopterin</name>
        <dbReference type="ChEBI" id="CHEBI:71302"/>
    </ligand>
    <ligandPart>
        <name>Mo</name>
        <dbReference type="ChEBI" id="CHEBI:28685"/>
    </ligandPart>
</feature>
<reference key="1">
    <citation type="journal article" date="1989" name="Gene">
        <title>Divergence of the nucleotide sequences encoding xanthine dehydrogenase in Calliphora vicina and Drosophila melanogaster.</title>
        <authorList>
            <person name="Houde M."/>
            <person name="Tiveron M.C."/>
            <person name="Bregegere F."/>
        </authorList>
    </citation>
    <scope>NUCLEOTIDE SEQUENCE</scope>
</reference>
<reference key="2">
    <citation type="journal article" date="1987" name="Gene">
        <title>Cloning and partial characterization of the xanthine dehydrogenase gene of Calliphora vicina, a distant relative of Drosophila melanogaster.</title>
        <authorList>
            <person name="Rocher-Chambonnet C."/>
            <person name="Berreur P."/>
            <person name="Houde M."/>
            <person name="Tiveron M.C."/>
            <person name="Lepesant J.-A."/>
            <person name="Bregegere F."/>
        </authorList>
    </citation>
    <scope>NUCLEOTIDE SEQUENCE [GENOMIC DNA] OF 208-367</scope>
</reference>
<organism>
    <name type="scientific">Calliphora vicina</name>
    <name type="common">Blue blowfly</name>
    <name type="synonym">Calliphora erythrocephala</name>
    <dbReference type="NCBI Taxonomy" id="7373"/>
    <lineage>
        <taxon>Eukaryota</taxon>
        <taxon>Metazoa</taxon>
        <taxon>Ecdysozoa</taxon>
        <taxon>Arthropoda</taxon>
        <taxon>Hexapoda</taxon>
        <taxon>Insecta</taxon>
        <taxon>Pterygota</taxon>
        <taxon>Neoptera</taxon>
        <taxon>Endopterygota</taxon>
        <taxon>Diptera</taxon>
        <taxon>Brachycera</taxon>
        <taxon>Muscomorpha</taxon>
        <taxon>Oestroidea</taxon>
        <taxon>Calliphoridae</taxon>
        <taxon>Calliphorinae</taxon>
        <taxon>Calliphora</taxon>
    </lineage>
</organism>
<dbReference type="EC" id="1.17.1.4"/>
<dbReference type="EMBL" id="X07229">
    <property type="protein sequence ID" value="CAA30189.1"/>
    <property type="molecule type" value="mRNA"/>
</dbReference>
<dbReference type="EMBL" id="X07323">
    <property type="protein sequence ID" value="CAA30281.1"/>
    <property type="molecule type" value="Genomic_DNA"/>
</dbReference>
<dbReference type="EMBL" id="X07324">
    <property type="protein sequence ID" value="CAA30281.1"/>
    <property type="status" value="JOINED"/>
    <property type="molecule type" value="Genomic_DNA"/>
</dbReference>
<dbReference type="EMBL" id="X07325">
    <property type="protein sequence ID" value="CAA30281.1"/>
    <property type="status" value="JOINED"/>
    <property type="molecule type" value="Genomic_DNA"/>
</dbReference>
<dbReference type="EMBL" id="M18423">
    <property type="protein sequence ID" value="AAA27879.1"/>
    <property type="molecule type" value="Genomic_DNA"/>
</dbReference>
<dbReference type="PIR" id="JQ0407">
    <property type="entry name" value="JQ0407"/>
</dbReference>
<dbReference type="SMR" id="P08793"/>
<dbReference type="GO" id="GO:0005777">
    <property type="term" value="C:peroxisome"/>
    <property type="evidence" value="ECO:0007669"/>
    <property type="project" value="UniProtKB-SubCell"/>
</dbReference>
<dbReference type="GO" id="GO:0051537">
    <property type="term" value="F:2 iron, 2 sulfur cluster binding"/>
    <property type="evidence" value="ECO:0000250"/>
    <property type="project" value="UniProtKB"/>
</dbReference>
<dbReference type="GO" id="GO:0071949">
    <property type="term" value="F:FAD binding"/>
    <property type="evidence" value="ECO:0007669"/>
    <property type="project" value="InterPro"/>
</dbReference>
<dbReference type="GO" id="GO:0050660">
    <property type="term" value="F:flavin adenine dinucleotide binding"/>
    <property type="evidence" value="ECO:0000250"/>
    <property type="project" value="UniProtKB"/>
</dbReference>
<dbReference type="GO" id="GO:0005506">
    <property type="term" value="F:iron ion binding"/>
    <property type="evidence" value="ECO:0007669"/>
    <property type="project" value="InterPro"/>
</dbReference>
<dbReference type="GO" id="GO:0043546">
    <property type="term" value="F:molybdopterin cofactor binding"/>
    <property type="evidence" value="ECO:0000250"/>
    <property type="project" value="UniProtKB"/>
</dbReference>
<dbReference type="GO" id="GO:0004854">
    <property type="term" value="F:xanthine dehydrogenase activity"/>
    <property type="evidence" value="ECO:0000250"/>
    <property type="project" value="UniProtKB"/>
</dbReference>
<dbReference type="GO" id="GO:0009115">
    <property type="term" value="P:xanthine catabolic process"/>
    <property type="evidence" value="ECO:0000250"/>
    <property type="project" value="UniProtKB"/>
</dbReference>
<dbReference type="FunFam" id="1.10.150.120:FF:000001">
    <property type="entry name" value="Aldehyde oxidase 1"/>
    <property type="match status" value="1"/>
</dbReference>
<dbReference type="FunFam" id="3.10.20.30:FF:000015">
    <property type="entry name" value="Aldehyde oxidase 1"/>
    <property type="match status" value="1"/>
</dbReference>
<dbReference type="FunFam" id="3.30.365.10:FF:000003">
    <property type="entry name" value="Aldehyde oxidase 1"/>
    <property type="match status" value="1"/>
</dbReference>
<dbReference type="FunFam" id="3.90.1170.50:FF:000001">
    <property type="entry name" value="Aldehyde oxidase 1"/>
    <property type="match status" value="1"/>
</dbReference>
<dbReference type="FunFam" id="3.30.365.10:FF:000001">
    <property type="entry name" value="Xanthine dehydrogenase oxidase"/>
    <property type="match status" value="1"/>
</dbReference>
<dbReference type="FunFam" id="3.30.365.10:FF:000002">
    <property type="entry name" value="Xanthine dehydrogenase oxidase"/>
    <property type="match status" value="1"/>
</dbReference>
<dbReference type="FunFam" id="3.30.365.10:FF:000004">
    <property type="entry name" value="Xanthine dehydrogenase oxidase"/>
    <property type="match status" value="1"/>
</dbReference>
<dbReference type="FunFam" id="3.30.390.50:FF:000001">
    <property type="entry name" value="Xanthine dehydrogenase oxidase"/>
    <property type="match status" value="1"/>
</dbReference>
<dbReference type="FunFam" id="3.30.43.10:FF:000001">
    <property type="entry name" value="Xanthine dehydrogenase/oxidase"/>
    <property type="match status" value="1"/>
</dbReference>
<dbReference type="FunFam" id="3.30.465.10:FF:000004">
    <property type="entry name" value="Xanthine dehydrogenase/oxidase"/>
    <property type="match status" value="1"/>
</dbReference>
<dbReference type="Gene3D" id="3.10.20.30">
    <property type="match status" value="1"/>
</dbReference>
<dbReference type="Gene3D" id="3.30.465.10">
    <property type="match status" value="1"/>
</dbReference>
<dbReference type="Gene3D" id="1.10.150.120">
    <property type="entry name" value="[2Fe-2S]-binding domain"/>
    <property type="match status" value="1"/>
</dbReference>
<dbReference type="Gene3D" id="3.90.1170.50">
    <property type="entry name" value="Aldehyde oxidase/xanthine dehydrogenase, a/b hammerhead"/>
    <property type="match status" value="1"/>
</dbReference>
<dbReference type="Gene3D" id="3.30.365.10">
    <property type="entry name" value="Aldehyde oxidase/xanthine dehydrogenase, molybdopterin binding domain"/>
    <property type="match status" value="4"/>
</dbReference>
<dbReference type="Gene3D" id="3.30.390.50">
    <property type="entry name" value="CO dehydrogenase flavoprotein, C-terminal domain"/>
    <property type="match status" value="1"/>
</dbReference>
<dbReference type="Gene3D" id="3.30.43.10">
    <property type="entry name" value="Uridine Diphospho-n-acetylenolpyruvylglucosamine Reductase, domain 2"/>
    <property type="match status" value="1"/>
</dbReference>
<dbReference type="InterPro" id="IPR002888">
    <property type="entry name" value="2Fe-2S-bd"/>
</dbReference>
<dbReference type="InterPro" id="IPR036884">
    <property type="entry name" value="2Fe-2S-bd_dom_sf"/>
</dbReference>
<dbReference type="InterPro" id="IPR036010">
    <property type="entry name" value="2Fe-2S_ferredoxin-like_sf"/>
</dbReference>
<dbReference type="InterPro" id="IPR001041">
    <property type="entry name" value="2Fe-2S_ferredoxin-type"/>
</dbReference>
<dbReference type="InterPro" id="IPR006058">
    <property type="entry name" value="2Fe2S_fd_BS"/>
</dbReference>
<dbReference type="InterPro" id="IPR000674">
    <property type="entry name" value="Ald_Oxase/Xan_DH_a/b"/>
</dbReference>
<dbReference type="InterPro" id="IPR036856">
    <property type="entry name" value="Ald_Oxase/Xan_DH_a/b_sf"/>
</dbReference>
<dbReference type="InterPro" id="IPR016208">
    <property type="entry name" value="Ald_Oxase/xanthine_DH-like"/>
</dbReference>
<dbReference type="InterPro" id="IPR008274">
    <property type="entry name" value="AldOxase/xan_DH_MoCoBD1"/>
</dbReference>
<dbReference type="InterPro" id="IPR046867">
    <property type="entry name" value="AldOxase/xan_DH_MoCoBD2"/>
</dbReference>
<dbReference type="InterPro" id="IPR037165">
    <property type="entry name" value="AldOxase/xan_DH_Mopterin-bd_sf"/>
</dbReference>
<dbReference type="InterPro" id="IPR012675">
    <property type="entry name" value="Beta-grasp_dom_sf"/>
</dbReference>
<dbReference type="InterPro" id="IPR005107">
    <property type="entry name" value="CO_DH_flav_C"/>
</dbReference>
<dbReference type="InterPro" id="IPR036683">
    <property type="entry name" value="CO_DH_flav_C_dom_sf"/>
</dbReference>
<dbReference type="InterPro" id="IPR016166">
    <property type="entry name" value="FAD-bd_PCMH"/>
</dbReference>
<dbReference type="InterPro" id="IPR036318">
    <property type="entry name" value="FAD-bd_PCMH-like_sf"/>
</dbReference>
<dbReference type="InterPro" id="IPR016167">
    <property type="entry name" value="FAD-bd_PCMH_sub1"/>
</dbReference>
<dbReference type="InterPro" id="IPR016169">
    <property type="entry name" value="FAD-bd_PCMH_sub2"/>
</dbReference>
<dbReference type="InterPro" id="IPR002346">
    <property type="entry name" value="Mopterin_DH_FAD-bd"/>
</dbReference>
<dbReference type="InterPro" id="IPR022407">
    <property type="entry name" value="OxRdtase_Mopterin_BS"/>
</dbReference>
<dbReference type="InterPro" id="IPR014307">
    <property type="entry name" value="Xanthine_DH_ssu"/>
</dbReference>
<dbReference type="NCBIfam" id="TIGR02963">
    <property type="entry name" value="xanthine_xdhA"/>
    <property type="match status" value="1"/>
</dbReference>
<dbReference type="PANTHER" id="PTHR45444">
    <property type="entry name" value="XANTHINE DEHYDROGENASE"/>
    <property type="match status" value="1"/>
</dbReference>
<dbReference type="PANTHER" id="PTHR45444:SF3">
    <property type="entry name" value="XANTHINE DEHYDROGENASE"/>
    <property type="match status" value="1"/>
</dbReference>
<dbReference type="Pfam" id="PF01315">
    <property type="entry name" value="Ald_Xan_dh_C"/>
    <property type="match status" value="1"/>
</dbReference>
<dbReference type="Pfam" id="PF03450">
    <property type="entry name" value="CO_deh_flav_C"/>
    <property type="match status" value="1"/>
</dbReference>
<dbReference type="Pfam" id="PF00941">
    <property type="entry name" value="FAD_binding_5"/>
    <property type="match status" value="1"/>
</dbReference>
<dbReference type="Pfam" id="PF00111">
    <property type="entry name" value="Fer2"/>
    <property type="match status" value="1"/>
</dbReference>
<dbReference type="Pfam" id="PF01799">
    <property type="entry name" value="Fer2_2"/>
    <property type="match status" value="1"/>
</dbReference>
<dbReference type="Pfam" id="PF02738">
    <property type="entry name" value="MoCoBD_1"/>
    <property type="match status" value="1"/>
</dbReference>
<dbReference type="Pfam" id="PF20256">
    <property type="entry name" value="MoCoBD_2"/>
    <property type="match status" value="1"/>
</dbReference>
<dbReference type="PIRSF" id="PIRSF000127">
    <property type="entry name" value="Xanthine_DH"/>
    <property type="match status" value="1"/>
</dbReference>
<dbReference type="SMART" id="SM01008">
    <property type="entry name" value="Ald_Xan_dh_C"/>
    <property type="match status" value="1"/>
</dbReference>
<dbReference type="SMART" id="SM01092">
    <property type="entry name" value="CO_deh_flav_C"/>
    <property type="match status" value="1"/>
</dbReference>
<dbReference type="SUPFAM" id="SSF54292">
    <property type="entry name" value="2Fe-2S ferredoxin-like"/>
    <property type="match status" value="1"/>
</dbReference>
<dbReference type="SUPFAM" id="SSF55447">
    <property type="entry name" value="CO dehydrogenase flavoprotein C-terminal domain-like"/>
    <property type="match status" value="1"/>
</dbReference>
<dbReference type="SUPFAM" id="SSF47741">
    <property type="entry name" value="CO dehydrogenase ISP C-domain like"/>
    <property type="match status" value="1"/>
</dbReference>
<dbReference type="SUPFAM" id="SSF54665">
    <property type="entry name" value="CO dehydrogenase molybdoprotein N-domain-like"/>
    <property type="match status" value="1"/>
</dbReference>
<dbReference type="SUPFAM" id="SSF56176">
    <property type="entry name" value="FAD-binding/transporter-associated domain-like"/>
    <property type="match status" value="1"/>
</dbReference>
<dbReference type="SUPFAM" id="SSF56003">
    <property type="entry name" value="Molybdenum cofactor-binding domain"/>
    <property type="match status" value="1"/>
</dbReference>
<dbReference type="PROSITE" id="PS00197">
    <property type="entry name" value="2FE2S_FER_1"/>
    <property type="match status" value="1"/>
</dbReference>
<dbReference type="PROSITE" id="PS51085">
    <property type="entry name" value="2FE2S_FER_2"/>
    <property type="match status" value="1"/>
</dbReference>
<dbReference type="PROSITE" id="PS51387">
    <property type="entry name" value="FAD_PCMH"/>
    <property type="match status" value="1"/>
</dbReference>
<dbReference type="PROSITE" id="PS00559">
    <property type="entry name" value="MOLYBDOPTERIN_EUK"/>
    <property type="match status" value="1"/>
</dbReference>
<proteinExistence type="evidence at transcript level"/>
<accession>P08793</accession>
<keyword id="KW-0001">2Fe-2S</keyword>
<keyword id="KW-0274">FAD</keyword>
<keyword id="KW-0285">Flavoprotein</keyword>
<keyword id="KW-0408">Iron</keyword>
<keyword id="KW-0411">Iron-sulfur</keyword>
<keyword id="KW-0479">Metal-binding</keyword>
<keyword id="KW-0500">Molybdenum</keyword>
<keyword id="KW-0520">NAD</keyword>
<keyword id="KW-0560">Oxidoreductase</keyword>
<keyword id="KW-0576">Peroxisome</keyword>
<name>XDH_CALVI</name>
<gene>
    <name type="primary">XDH</name>
</gene>
<sequence>MTQEHNAAVLDLNPTFSTLIFFVNGKKVIDTNPDPECTLLTYLREKLRLCGTKLGCGEGGCGACTVMISRIDTLTNRIKHIAVNACLTPVCAMHGSAVTTVEGIGSTRTRLHPVQERLAKAHGSQCGFCTPGIVMSMYALLRNLSQPSMKDLEIAFQGNLCRCTGYRPILEGYKTFTKEFGCAMGDKCCKVNGNKCGEGMENGGDMVDDKLFEKSEFVPFDPSQEPIFPPELQLNKDWDSQTLVYKGERATWYRPGNLEDLLKIKAQFPEAKLVVGNTEIGVEVKFKHFLYPVLVNPTKVKEMIDVQELEDSIYFGASVSLMDIDRILRSSIEKLPEHQTRFFQCAVNMLHYFAGKQIRNVASLGGNIMTGSPISDMNPVLMAGAVKFKVAKYVEGQIKYREVCMASGFFTGYRKNVIEPTEILVGLYFPKTLEHQYVVAFKQAKRRDDDIAIVNAAINVFIDPRSITVDKVYMAFGGMAPTTVLATRTADIMVKQQWNKVLMERVVENLCAELPLAPSAPGGMIAYRRSLVVSLFFKAYLTITQQLIKSGILPQDSLPQEELSGSDVFHTPALKSAQLFEKVSNKQSECDPIGRPKIHASALKQATGEAIYCDDMPRMENELYLALVLSTKAHAKILSIDASEALAMPGVHAFFSSKDITQHENEVGPVFHDEEVFASDMVYCQGQVIGAIAADNPNFSSKTARKVTIEYEDIKPVIITIEQAIEHKSYFPDYPRFTEIGDVEKAFSEADHVYEGSCRMGGQEHFYLETHASLAVPRDSDEIEIFCSTQHPSEVQKLVAHVLSTSAHRVVCRAKRLGGGFGGKESRAIAVALPVALACHRLRRPIRCMLDRDEDMMITGTRHPFLFKYKIAFTSEGRLTGCYIECYNNAGWSMDLSFSVLERAMFHFENCYKIPNIKVGGWVCKTNLPSNTAFRGFGGPQGMFAGEHIIRDVARILGKDYLEIMKQNFYKEGDITHYQQKLDNFPIEKCFYDCLQQSNYYQKRKEIEEFNRNHRWRKRGISLVPTKYGIAFGVSHLNQAGALINIYADGSVLLSHGGVEIGQGLHTKMIQCCARALQIPIEFIHISETATDKVPNTSPTAASSGSDLNGMAVLDACEKLNKRLAPIKEANPNGSWTEWINKAYFERVSLSATGFYRMPDIGYDPVQNPNALMYNYFTNGVGSSIVEIDCLTGDHQVLSTDIVMDIGSSLNPAIDIGQIEGAFMQGYGLFTLEEMIYSPQGVLYSRGPGMYKLPGFADIPGEFNVTILTGAANPRAVYSSKAVGEPPLFIGCSVFFAIKEAITSARLMNGLSEDFKLESPATSARIRMACQDEFTNLIEQPPAGSYVPWNIVP</sequence>
<comment type="function">
    <text evidence="1">Key enzyme in purine degradation. Catalyzes the oxidation of hypoxanthine to xanthine. Catalyzes the oxidation of xanthine to uric acid (By similarity).</text>
</comment>
<comment type="catalytic activity">
    <reaction>
        <text>xanthine + NAD(+) + H2O = urate + NADH + H(+)</text>
        <dbReference type="Rhea" id="RHEA:16669"/>
        <dbReference type="ChEBI" id="CHEBI:15377"/>
        <dbReference type="ChEBI" id="CHEBI:15378"/>
        <dbReference type="ChEBI" id="CHEBI:17712"/>
        <dbReference type="ChEBI" id="CHEBI:17775"/>
        <dbReference type="ChEBI" id="CHEBI:57540"/>
        <dbReference type="ChEBI" id="CHEBI:57945"/>
        <dbReference type="EC" id="1.17.1.4"/>
    </reaction>
</comment>
<comment type="catalytic activity">
    <reaction>
        <text>hypoxanthine + NAD(+) + H2O = xanthine + NADH + H(+)</text>
        <dbReference type="Rhea" id="RHEA:24670"/>
        <dbReference type="ChEBI" id="CHEBI:15377"/>
        <dbReference type="ChEBI" id="CHEBI:15378"/>
        <dbReference type="ChEBI" id="CHEBI:17368"/>
        <dbReference type="ChEBI" id="CHEBI:17712"/>
        <dbReference type="ChEBI" id="CHEBI:57540"/>
        <dbReference type="ChEBI" id="CHEBI:57945"/>
        <dbReference type="EC" id="1.17.1.4"/>
    </reaction>
</comment>
<comment type="cofactor">
    <cofactor evidence="1">
        <name>FAD</name>
        <dbReference type="ChEBI" id="CHEBI:57692"/>
    </cofactor>
</comment>
<comment type="cofactor">
    <cofactor evidence="1">
        <name>Mo-molybdopterin</name>
        <dbReference type="ChEBI" id="CHEBI:71302"/>
    </cofactor>
    <text evidence="1">Binds 1 Mo-molybdopterin (Mo-MPT) cofactor per subunit.</text>
</comment>
<comment type="cofactor">
    <cofactor evidence="2">
        <name>[2Fe-2S] cluster</name>
        <dbReference type="ChEBI" id="CHEBI:190135"/>
    </cofactor>
    <text evidence="2">Binds 2 [2Fe-2S] clusters per subunit.</text>
</comment>
<comment type="subunit">
    <text evidence="1">Homodimer.</text>
</comment>
<comment type="subcellular location">
    <subcellularLocation>
        <location evidence="1">Peroxisome</location>
    </subcellularLocation>
</comment>
<comment type="similarity">
    <text evidence="5">Belongs to the xanthine dehydrogenase family.</text>
</comment>